<feature type="chain" id="PRO_1000056961" description="Inosine/xanthosine triphosphatase">
    <location>
        <begin position="1"/>
        <end position="175"/>
    </location>
</feature>
<feature type="binding site" evidence="1">
    <location>
        <begin position="8"/>
        <end position="13"/>
    </location>
    <ligand>
        <name>substrate</name>
    </ligand>
</feature>
<feature type="binding site" evidence="1">
    <location>
        <position position="38"/>
    </location>
    <ligand>
        <name>Mg(2+)</name>
        <dbReference type="ChEBI" id="CHEBI:18420"/>
    </ligand>
</feature>
<feature type="binding site" evidence="1">
    <location>
        <begin position="68"/>
        <end position="69"/>
    </location>
    <ligand>
        <name>substrate</name>
    </ligand>
</feature>
<feature type="binding site" evidence="1">
    <location>
        <position position="68"/>
    </location>
    <ligand>
        <name>Mg(2+)</name>
        <dbReference type="ChEBI" id="CHEBI:18420"/>
    </ligand>
</feature>
<accession>A1JJB7</accession>
<protein>
    <recommendedName>
        <fullName evidence="1">Inosine/xanthosine triphosphatase</fullName>
        <shortName evidence="1">ITPase/XTPase</shortName>
        <ecNumber evidence="1">3.6.1.73</ecNumber>
    </recommendedName>
    <alternativeName>
        <fullName evidence="1">Non-canonical purine NTP phosphatase</fullName>
    </alternativeName>
    <alternativeName>
        <fullName evidence="1">Non-standard purine NTP phosphatase</fullName>
    </alternativeName>
    <alternativeName>
        <fullName evidence="1">Nucleoside-triphosphate phosphatase</fullName>
        <shortName evidence="1">NTPase</shortName>
    </alternativeName>
</protein>
<reference key="1">
    <citation type="journal article" date="2006" name="PLoS Genet.">
        <title>The complete genome sequence and comparative genome analysis of the high pathogenicity Yersinia enterocolitica strain 8081.</title>
        <authorList>
            <person name="Thomson N.R."/>
            <person name="Howard S."/>
            <person name="Wren B.W."/>
            <person name="Holden M.T.G."/>
            <person name="Crossman L."/>
            <person name="Challis G.L."/>
            <person name="Churcher C."/>
            <person name="Mungall K."/>
            <person name="Brooks K."/>
            <person name="Chillingworth T."/>
            <person name="Feltwell T."/>
            <person name="Abdellah Z."/>
            <person name="Hauser H."/>
            <person name="Jagels K."/>
            <person name="Maddison M."/>
            <person name="Moule S."/>
            <person name="Sanders M."/>
            <person name="Whitehead S."/>
            <person name="Quail M.A."/>
            <person name="Dougan G."/>
            <person name="Parkhill J."/>
            <person name="Prentice M.B."/>
        </authorList>
    </citation>
    <scope>NUCLEOTIDE SEQUENCE [LARGE SCALE GENOMIC DNA]</scope>
    <source>
        <strain>NCTC 13174 / 8081</strain>
    </source>
</reference>
<keyword id="KW-0378">Hydrolase</keyword>
<keyword id="KW-0460">Magnesium</keyword>
<keyword id="KW-0464">Manganese</keyword>
<keyword id="KW-0479">Metal-binding</keyword>
<keyword id="KW-0546">Nucleotide metabolism</keyword>
<keyword id="KW-0547">Nucleotide-binding</keyword>
<evidence type="ECO:0000255" key="1">
    <source>
        <dbReference type="HAMAP-Rule" id="MF_00648"/>
    </source>
</evidence>
<dbReference type="EC" id="3.6.1.73" evidence="1"/>
<dbReference type="EMBL" id="AM286415">
    <property type="protein sequence ID" value="CAL10706.1"/>
    <property type="molecule type" value="Genomic_DNA"/>
</dbReference>
<dbReference type="RefSeq" id="WP_011815530.1">
    <property type="nucleotide sequence ID" value="NC_008800.1"/>
</dbReference>
<dbReference type="RefSeq" id="YP_001004946.1">
    <property type="nucleotide sequence ID" value="NC_008800.1"/>
</dbReference>
<dbReference type="SMR" id="A1JJB7"/>
<dbReference type="KEGG" id="yen:YE0591"/>
<dbReference type="PATRIC" id="fig|393305.7.peg.685"/>
<dbReference type="eggNOG" id="COG1986">
    <property type="taxonomic scope" value="Bacteria"/>
</dbReference>
<dbReference type="HOGENOM" id="CLU_087417_1_0_6"/>
<dbReference type="OrthoDB" id="6334099at2"/>
<dbReference type="Proteomes" id="UP000000642">
    <property type="component" value="Chromosome"/>
</dbReference>
<dbReference type="GO" id="GO:0103023">
    <property type="term" value="F:ITPase activity"/>
    <property type="evidence" value="ECO:0007669"/>
    <property type="project" value="UniProtKB-EC"/>
</dbReference>
<dbReference type="GO" id="GO:0046872">
    <property type="term" value="F:metal ion binding"/>
    <property type="evidence" value="ECO:0007669"/>
    <property type="project" value="UniProtKB-KW"/>
</dbReference>
<dbReference type="GO" id="GO:0000166">
    <property type="term" value="F:nucleotide binding"/>
    <property type="evidence" value="ECO:0007669"/>
    <property type="project" value="UniProtKB-KW"/>
</dbReference>
<dbReference type="GO" id="GO:0017111">
    <property type="term" value="F:ribonucleoside triphosphate phosphatase activity"/>
    <property type="evidence" value="ECO:0000250"/>
    <property type="project" value="UniProtKB"/>
</dbReference>
<dbReference type="GO" id="GO:0009117">
    <property type="term" value="P:nucleotide metabolic process"/>
    <property type="evidence" value="ECO:0007669"/>
    <property type="project" value="UniProtKB-KW"/>
</dbReference>
<dbReference type="GO" id="GO:0006772">
    <property type="term" value="P:thiamine metabolic process"/>
    <property type="evidence" value="ECO:0007669"/>
    <property type="project" value="TreeGrafter"/>
</dbReference>
<dbReference type="FunFam" id="3.90.950.10:FF:000002">
    <property type="entry name" value="Inosine/xanthosine triphosphatase"/>
    <property type="match status" value="1"/>
</dbReference>
<dbReference type="Gene3D" id="3.90.950.10">
    <property type="match status" value="1"/>
</dbReference>
<dbReference type="HAMAP" id="MF_00648">
    <property type="entry name" value="Non_canon_purine_NTPase_YjjX"/>
    <property type="match status" value="1"/>
</dbReference>
<dbReference type="InterPro" id="IPR029001">
    <property type="entry name" value="ITPase-like_fam"/>
</dbReference>
<dbReference type="InterPro" id="IPR002786">
    <property type="entry name" value="Non_canon_purine_NTPase"/>
</dbReference>
<dbReference type="InterPro" id="IPR026533">
    <property type="entry name" value="NTPase/PRRC1"/>
</dbReference>
<dbReference type="InterPro" id="IPR050299">
    <property type="entry name" value="YjjX_NTPase"/>
</dbReference>
<dbReference type="NCBIfam" id="TIGR00258">
    <property type="entry name" value="inosine/xanthosine triphosphatase"/>
    <property type="match status" value="1"/>
</dbReference>
<dbReference type="NCBIfam" id="NF003459">
    <property type="entry name" value="PRK05074.1"/>
    <property type="match status" value="1"/>
</dbReference>
<dbReference type="PANTHER" id="PTHR34699">
    <property type="match status" value="1"/>
</dbReference>
<dbReference type="PANTHER" id="PTHR34699:SF2">
    <property type="entry name" value="NON-CANONICAL PURINE NTP PHOSPHATASE_PRRC1 DOMAIN-CONTAINING PROTEIN"/>
    <property type="match status" value="1"/>
</dbReference>
<dbReference type="Pfam" id="PF01931">
    <property type="entry name" value="NTPase_I-T"/>
    <property type="match status" value="1"/>
</dbReference>
<dbReference type="SUPFAM" id="SSF52972">
    <property type="entry name" value="ITPase-like"/>
    <property type="match status" value="1"/>
</dbReference>
<gene>
    <name type="ordered locus">YE0591</name>
</gene>
<organism>
    <name type="scientific">Yersinia enterocolitica serotype O:8 / biotype 1B (strain NCTC 13174 / 8081)</name>
    <dbReference type="NCBI Taxonomy" id="393305"/>
    <lineage>
        <taxon>Bacteria</taxon>
        <taxon>Pseudomonadati</taxon>
        <taxon>Pseudomonadota</taxon>
        <taxon>Gammaproteobacteria</taxon>
        <taxon>Enterobacterales</taxon>
        <taxon>Yersiniaceae</taxon>
        <taxon>Yersinia</taxon>
    </lineage>
</organism>
<sequence length="175" mass="19310">MYHVVAATTNPAKIKAISLAFDDVYGPGQYRIEGINVDSGVPLQPIGSTETRTGARQRVSNARQMRPEADFWVGVEAGIEDNMTFAWMVIEHLQWRGESRSASLMLPDIILQGIRQGRELGDEMADLTGISNVKHKGGAIGIFTDGKLTRTSVYHQALLLALVPFNNEIYQRPAQ</sequence>
<comment type="function">
    <text evidence="1">Phosphatase that hydrolyzes non-canonical purine nucleotides such as XTP and ITP to their respective diphosphate derivatives. Probably excludes non-canonical purines from DNA/RNA precursor pool, thus preventing their incorporation into DNA/RNA and avoiding chromosomal lesions.</text>
</comment>
<comment type="catalytic activity">
    <reaction evidence="1">
        <text>XTP + H2O = XDP + phosphate + H(+)</text>
        <dbReference type="Rhea" id="RHEA:28406"/>
        <dbReference type="ChEBI" id="CHEBI:15377"/>
        <dbReference type="ChEBI" id="CHEBI:15378"/>
        <dbReference type="ChEBI" id="CHEBI:43474"/>
        <dbReference type="ChEBI" id="CHEBI:59884"/>
        <dbReference type="ChEBI" id="CHEBI:61314"/>
        <dbReference type="EC" id="3.6.1.73"/>
    </reaction>
</comment>
<comment type="catalytic activity">
    <reaction evidence="1">
        <text>ITP + H2O = IDP + phosphate + H(+)</text>
        <dbReference type="Rhea" id="RHEA:28330"/>
        <dbReference type="ChEBI" id="CHEBI:15377"/>
        <dbReference type="ChEBI" id="CHEBI:15378"/>
        <dbReference type="ChEBI" id="CHEBI:43474"/>
        <dbReference type="ChEBI" id="CHEBI:58280"/>
        <dbReference type="ChEBI" id="CHEBI:61402"/>
        <dbReference type="EC" id="3.6.1.73"/>
    </reaction>
</comment>
<comment type="cofactor">
    <cofactor evidence="1">
        <name>Mg(2+)</name>
        <dbReference type="ChEBI" id="CHEBI:18420"/>
    </cofactor>
    <cofactor evidence="1">
        <name>Mn(2+)</name>
        <dbReference type="ChEBI" id="CHEBI:29035"/>
    </cofactor>
    <text evidence="1">Binds 1 divalent metal cation per subunit; can use either Mg(2+) or Mn(2+).</text>
</comment>
<comment type="subunit">
    <text evidence="1">Homodimer.</text>
</comment>
<comment type="similarity">
    <text evidence="1">Belongs to the YjjX NTPase family.</text>
</comment>
<proteinExistence type="inferred from homology"/>
<name>NCPP_YERE8</name>